<gene>
    <name type="primary">mtmB1</name>
    <name type="ordered locus">Mbar_A0843</name>
</gene>
<dbReference type="EC" id="2.1.1.248"/>
<dbReference type="EMBL" id="CP000099">
    <property type="protein sequence ID" value="AAZ69819.4"/>
    <property type="molecule type" value="Genomic_DNA"/>
</dbReference>
<dbReference type="STRING" id="269797.Mbar_A0843"/>
<dbReference type="PaxDb" id="269797-Mbar_A0843"/>
<dbReference type="KEGG" id="mba:Mbar_A0843"/>
<dbReference type="eggNOG" id="arCOG05143">
    <property type="taxonomic scope" value="Archaea"/>
</dbReference>
<dbReference type="HOGENOM" id="CLU_047925_0_0_2"/>
<dbReference type="UniPathway" id="UPA00643"/>
<dbReference type="GO" id="GO:0043852">
    <property type="term" value="F:monomethylamine methyltransferase activity"/>
    <property type="evidence" value="ECO:0007669"/>
    <property type="project" value="UniProtKB-EC"/>
</dbReference>
<dbReference type="GO" id="GO:0015948">
    <property type="term" value="P:methanogenesis"/>
    <property type="evidence" value="ECO:0007669"/>
    <property type="project" value="UniProtKB-KW"/>
</dbReference>
<dbReference type="GO" id="GO:0032259">
    <property type="term" value="P:methylation"/>
    <property type="evidence" value="ECO:0007669"/>
    <property type="project" value="UniProtKB-KW"/>
</dbReference>
<dbReference type="FunFam" id="3.20.20.460:FF:000001">
    <property type="entry name" value="Monomethylamine methyltransferase MtmB1"/>
    <property type="match status" value="1"/>
</dbReference>
<dbReference type="Gene3D" id="3.20.20.460">
    <property type="entry name" value="Monomethylamine methyltransferase MtmB"/>
    <property type="match status" value="1"/>
</dbReference>
<dbReference type="InterPro" id="IPR008031">
    <property type="entry name" value="MtmB_MeTrfase"/>
</dbReference>
<dbReference type="InterPro" id="IPR036655">
    <property type="entry name" value="MtmB_sf"/>
</dbReference>
<dbReference type="Pfam" id="PF05369">
    <property type="entry name" value="MtmB"/>
    <property type="match status" value="1"/>
</dbReference>
<dbReference type="SUPFAM" id="SSF75098">
    <property type="entry name" value="Monomethylamine methyltransferase MtmB"/>
    <property type="match status" value="1"/>
</dbReference>
<name>MTMB1_METBF</name>
<protein>
    <recommendedName>
        <fullName>Monomethylamine methyltransferase MtmB1</fullName>
        <shortName>MMA methyltransferase 1</shortName>
        <shortName>MMAMT 1</shortName>
        <ecNumber>2.1.1.248</ecNumber>
    </recommendedName>
</protein>
<feature type="initiator methionine" description="Removed" evidence="1">
    <location>
        <position position="1"/>
    </location>
</feature>
<feature type="chain" id="PRO_0000216552" description="Monomethylamine methyltransferase MtmB1">
    <location>
        <begin position="2"/>
        <end position="458"/>
    </location>
</feature>
<feature type="non-standard amino acid" description="Pyrrolysine" evidence="1">
    <location>
        <position position="202"/>
    </location>
</feature>
<evidence type="ECO:0000250" key="1"/>
<evidence type="ECO:0000305" key="2"/>
<proteinExistence type="inferred from homology"/>
<keyword id="KW-0484">Methanogenesis</keyword>
<keyword id="KW-0489">Methyltransferase</keyword>
<keyword id="KW-0669">Pyrrolysine</keyword>
<keyword id="KW-0808">Transferase</keyword>
<comment type="function">
    <text evidence="1">Catalyzes the transfer of the methyl group from monomethylamine to the corrinoid cofactor of MtmC.</text>
</comment>
<comment type="catalytic activity">
    <reaction>
        <text>Co(I)-[methylamine-specific corrinoid protein] + methylamine + H(+) = methyl-Co(III)-[methylamine-specific corrinoid protein] + NH4(+)</text>
        <dbReference type="Rhea" id="RHEA:26059"/>
        <dbReference type="Rhea" id="RHEA-COMP:11120"/>
        <dbReference type="Rhea" id="RHEA-COMP:11121"/>
        <dbReference type="ChEBI" id="CHEBI:15378"/>
        <dbReference type="ChEBI" id="CHEBI:28938"/>
        <dbReference type="ChEBI" id="CHEBI:59338"/>
        <dbReference type="ChEBI" id="CHEBI:85033"/>
        <dbReference type="ChEBI" id="CHEBI:85035"/>
        <dbReference type="EC" id="2.1.1.248"/>
    </reaction>
</comment>
<comment type="pathway">
    <text>One-carbon metabolism; methanogenesis from methylamine.</text>
</comment>
<comment type="similarity">
    <text evidence="2">Belongs to the monomethylamine methyltransferase family.</text>
</comment>
<reference key="1">
    <citation type="journal article" date="2006" name="J. Bacteriol.">
        <title>The Methanosarcina barkeri genome: comparative analysis with Methanosarcina acetivorans and Methanosarcina mazei reveals extensive rearrangement within methanosarcinal genomes.</title>
        <authorList>
            <person name="Maeder D.L."/>
            <person name="Anderson I."/>
            <person name="Brettin T.S."/>
            <person name="Bruce D.C."/>
            <person name="Gilna P."/>
            <person name="Han C.S."/>
            <person name="Lapidus A."/>
            <person name="Metcalf W.W."/>
            <person name="Saunders E."/>
            <person name="Tapia R."/>
            <person name="Sowers K.R."/>
        </authorList>
    </citation>
    <scope>NUCLEOTIDE SEQUENCE [LARGE SCALE GENOMIC DNA]</scope>
    <source>
        <strain>Fusaro / DSM 804</strain>
    </source>
</reference>
<reference key="2">
    <citation type="submission" date="2006-06" db="EMBL/GenBank/DDBJ databases">
        <authorList>
            <person name="Copeland A."/>
            <person name="Lucas S."/>
            <person name="Lapidus A."/>
            <person name="Barry K."/>
            <person name="Detter J.C."/>
            <person name="Glavina T."/>
            <person name="Hammon N."/>
            <person name="Israni S."/>
            <person name="Pitluck S."/>
            <person name="Goodwin L.A."/>
            <person name="Saunders E.H."/>
            <person name="Schmutz J."/>
            <person name="Larimer F."/>
            <person name="Land M."/>
            <person name="Anderson I."/>
            <person name="Richardson P."/>
        </authorList>
    </citation>
    <scope>SEQUENCE REVISION</scope>
</reference>
<sequence length="458" mass="50104">MTFRKSFDCYDFYDRAKVGEKCTQDDWDLMKIPMKAMELKQKYGLDFKGEFIPTDKDMMEKLFKAGFEMLLECGIYCTDTHRIVKYTEDEIWDAINNVQKEFVLGTGRDAVNVKKRSVGDKAKPIVQGGPTGSPISEDVFMPVHMSYALEKEVDTIVNGVMTSVRGKAPVPKSPYEVLAAKTETRLIKNACAMAGRPGMGVOGPETSLSAQGNISADCAGGMTCTDSHEVSQLNELKIDLDAISVIAHYKGNSDIIMDEQMPIFGGYAGGIEETTIVDVATHINAVIMSSASWHLDGPVHIRWGSTNTRETLTIAGWACATISEFTDILSGNQYYPCAGPCTEMCLLEASAQSITDTASGREILSGVASAKGVVTDKTTGMEARMMGEVARATAGVEISEVNVILDKLVALYEKNYASAPAGKTFQECYDVKTVTPTEEYMQVYDGARKKLEDLGLVF</sequence>
<accession>Q46E72</accession>
<accession>Q46E73</accession>
<organism>
    <name type="scientific">Methanosarcina barkeri (strain Fusaro / DSM 804)</name>
    <dbReference type="NCBI Taxonomy" id="269797"/>
    <lineage>
        <taxon>Archaea</taxon>
        <taxon>Methanobacteriati</taxon>
        <taxon>Methanobacteriota</taxon>
        <taxon>Stenosarchaea group</taxon>
        <taxon>Methanomicrobia</taxon>
        <taxon>Methanosarcinales</taxon>
        <taxon>Methanosarcinaceae</taxon>
        <taxon>Methanosarcina</taxon>
    </lineage>
</organism>